<dbReference type="EMBL" id="BA000033">
    <property type="protein sequence ID" value="BAB94762.1"/>
    <property type="molecule type" value="Genomic_DNA"/>
</dbReference>
<dbReference type="RefSeq" id="WP_001154224.1">
    <property type="nucleotide sequence ID" value="NC_003923.1"/>
</dbReference>
<dbReference type="SMR" id="Q8NXC4"/>
<dbReference type="KEGG" id="sam:MW0897"/>
<dbReference type="HOGENOM" id="CLU_054518_0_0_9"/>
<dbReference type="UniPathway" id="UPA00556"/>
<dbReference type="GO" id="GO:0005886">
    <property type="term" value="C:plasma membrane"/>
    <property type="evidence" value="ECO:0007669"/>
    <property type="project" value="UniProtKB-SubCell"/>
</dbReference>
<dbReference type="GO" id="GO:0015297">
    <property type="term" value="F:antiporter activity"/>
    <property type="evidence" value="ECO:0007669"/>
    <property type="project" value="UniProtKB-KW"/>
</dbReference>
<dbReference type="GO" id="GO:0006869">
    <property type="term" value="P:lipid transport"/>
    <property type="evidence" value="ECO:0007669"/>
    <property type="project" value="UniProtKB-KW"/>
</dbReference>
<dbReference type="GO" id="GO:0070395">
    <property type="term" value="P:lipoteichoic acid biosynthetic process"/>
    <property type="evidence" value="ECO:0007669"/>
    <property type="project" value="UniProtKB-UniPathway"/>
</dbReference>
<dbReference type="CDD" id="cd17325">
    <property type="entry name" value="MFS_MdtG_SLC18_like"/>
    <property type="match status" value="1"/>
</dbReference>
<dbReference type="Gene3D" id="1.20.1250.20">
    <property type="entry name" value="MFS general substrate transporter like domains"/>
    <property type="match status" value="2"/>
</dbReference>
<dbReference type="InterPro" id="IPR050495">
    <property type="entry name" value="ATG22/LtaA_families"/>
</dbReference>
<dbReference type="InterPro" id="IPR011701">
    <property type="entry name" value="MFS"/>
</dbReference>
<dbReference type="InterPro" id="IPR020846">
    <property type="entry name" value="MFS_dom"/>
</dbReference>
<dbReference type="InterPro" id="IPR036259">
    <property type="entry name" value="MFS_trans_sf"/>
</dbReference>
<dbReference type="NCBIfam" id="NF047396">
    <property type="entry name" value="MFS_flip_LtaA"/>
    <property type="match status" value="1"/>
</dbReference>
<dbReference type="PANTHER" id="PTHR23519">
    <property type="entry name" value="AUTOPHAGY-RELATED PROTEIN 22"/>
    <property type="match status" value="1"/>
</dbReference>
<dbReference type="PANTHER" id="PTHR23519:SF1">
    <property type="entry name" value="AUTOPHAGY-RELATED PROTEIN 22"/>
    <property type="match status" value="1"/>
</dbReference>
<dbReference type="Pfam" id="PF07690">
    <property type="entry name" value="MFS_1"/>
    <property type="match status" value="1"/>
</dbReference>
<dbReference type="SUPFAM" id="SSF103473">
    <property type="entry name" value="MFS general substrate transporter"/>
    <property type="match status" value="1"/>
</dbReference>
<dbReference type="PROSITE" id="PS50850">
    <property type="entry name" value="MFS"/>
    <property type="match status" value="1"/>
</dbReference>
<accession>Q8NXC4</accession>
<comment type="function">
    <text evidence="1">Proton-coupled antiporter flippase that catalyzes the translocation, from the inner to the outer leaflet of the cell membrane, of the lipid-linked disaccharide (anchor-LLD) that anchors lipoteichoic acids (LTA) to the cell membrane.</text>
</comment>
<comment type="pathway">
    <text evidence="1">Cell wall biogenesis; lipoteichoic acid biosynthesis.</text>
</comment>
<comment type="subcellular location">
    <subcellularLocation>
        <location evidence="1">Cell membrane</location>
        <topology evidence="1">Multi-pass membrane protein</topology>
    </subcellularLocation>
</comment>
<comment type="similarity">
    <text evidence="3">Belongs to the major facilitator superfamily. LtaA family.</text>
</comment>
<organism>
    <name type="scientific">Staphylococcus aureus (strain MW2)</name>
    <dbReference type="NCBI Taxonomy" id="196620"/>
    <lineage>
        <taxon>Bacteria</taxon>
        <taxon>Bacillati</taxon>
        <taxon>Bacillota</taxon>
        <taxon>Bacilli</taxon>
        <taxon>Bacillales</taxon>
        <taxon>Staphylococcaceae</taxon>
        <taxon>Staphylococcus</taxon>
    </lineage>
</organism>
<proteinExistence type="inferred from homology"/>
<reference key="1">
    <citation type="journal article" date="2002" name="Lancet">
        <title>Genome and virulence determinants of high virulence community-acquired MRSA.</title>
        <authorList>
            <person name="Baba T."/>
            <person name="Takeuchi F."/>
            <person name="Kuroda M."/>
            <person name="Yuzawa H."/>
            <person name="Aoki K."/>
            <person name="Oguchi A."/>
            <person name="Nagai Y."/>
            <person name="Iwama N."/>
            <person name="Asano K."/>
            <person name="Naimi T."/>
            <person name="Kuroda H."/>
            <person name="Cui L."/>
            <person name="Yamamoto K."/>
            <person name="Hiramatsu K."/>
        </authorList>
    </citation>
    <scope>NUCLEOTIDE SEQUENCE [LARGE SCALE GENOMIC DNA]</scope>
    <source>
        <strain>MW2</strain>
    </source>
</reference>
<keyword id="KW-0050">Antiport</keyword>
<keyword id="KW-1003">Cell membrane</keyword>
<keyword id="KW-0445">Lipid transport</keyword>
<keyword id="KW-0472">Membrane</keyword>
<keyword id="KW-0812">Transmembrane</keyword>
<keyword id="KW-1133">Transmembrane helix</keyword>
<keyword id="KW-0813">Transport</keyword>
<keyword id="KW-0843">Virulence</keyword>
<feature type="chain" id="PRO_0000287157" description="Proton-coupled antiporter flippase LtaA">
    <location>
        <begin position="1"/>
        <end position="396"/>
    </location>
</feature>
<feature type="transmembrane region" description="Helical" evidence="2">
    <location>
        <begin position="15"/>
        <end position="34"/>
    </location>
</feature>
<feature type="transmembrane region" description="Helical" evidence="2">
    <location>
        <begin position="46"/>
        <end position="73"/>
    </location>
</feature>
<feature type="transmembrane region" description="Helical" evidence="2">
    <location>
        <begin position="80"/>
        <end position="99"/>
    </location>
</feature>
<feature type="transmembrane region" description="Helical" evidence="2">
    <location>
        <begin position="105"/>
        <end position="126"/>
    </location>
</feature>
<feature type="transmembrane region" description="Helical" evidence="2">
    <location>
        <begin position="138"/>
        <end position="159"/>
    </location>
</feature>
<feature type="transmembrane region" description="Helical" evidence="2">
    <location>
        <begin position="165"/>
        <end position="184"/>
    </location>
</feature>
<feature type="transmembrane region" description="Helical" evidence="2">
    <location>
        <begin position="211"/>
        <end position="231"/>
    </location>
</feature>
<feature type="transmembrane region" description="Helical" evidence="2">
    <location>
        <begin position="243"/>
        <end position="264"/>
    </location>
</feature>
<feature type="transmembrane region" description="Helical" evidence="2">
    <location>
        <begin position="276"/>
        <end position="298"/>
    </location>
</feature>
<feature type="transmembrane region" description="Helical" evidence="2">
    <location>
        <begin position="304"/>
        <end position="326"/>
    </location>
</feature>
<feature type="transmembrane region" description="Helical" evidence="2">
    <location>
        <begin position="338"/>
        <end position="358"/>
    </location>
</feature>
<feature type="transmembrane region" description="Helical" evidence="2">
    <location>
        <begin position="370"/>
        <end position="390"/>
    </location>
</feature>
<sequence>MQDSSLNNYANHKNFILMLIILFLMEFARGMYILSYINFLPTVTSIAVAITSLAFSIHFIADASTNFVIGFLLKKFGTKIVLTTGFILAFTSLFLVIWFPASPFVIIFSAMMLGIAVSPIWVIMLSSVEEDKRGKQMGYVYFSWLLGLLVGMVFMNLLIKVHPTRFAFMMSLVVLIAWILYYFVDVKLTNYNTRPVKAQLRQIVDVTKRHLLLFPGILLQGAAIAALVPILPTYATKVINVSTIEYTVAIIIGGIGCAVSMLFLSKLIDNRSRNFMYGVILSGFILYMILIFTLSMIVNIHIVWIIALAIGLMYGILLPAWNTFMARFIKSDEQEETWGVFNSIQGFGSMIGPLFGGLITQFTNNLNNTFYFSALIFLVLAVFYGSYFIANREKAK</sequence>
<gene>
    <name type="primary">ltaA</name>
    <name type="ordered locus">MW0897</name>
</gene>
<protein>
    <recommendedName>
        <fullName evidence="1">Proton-coupled antiporter flippase LtaA</fullName>
    </recommendedName>
    <alternativeName>
        <fullName evidence="1">Lipoteichoic acid protein A</fullName>
    </alternativeName>
</protein>
<name>LTAA_STAAW</name>
<evidence type="ECO:0000250" key="1">
    <source>
        <dbReference type="UniProtKB" id="Q2FZP8"/>
    </source>
</evidence>
<evidence type="ECO:0000255" key="2"/>
<evidence type="ECO:0000305" key="3"/>